<protein>
    <recommendedName>
        <fullName>Translation initiation factor 2 subunit beta</fullName>
    </recommendedName>
    <alternativeName>
        <fullName>aIF2-beta</fullName>
    </alternativeName>
    <alternativeName>
        <fullName>eIF-2-beta</fullName>
    </alternativeName>
</protein>
<reference key="1">
    <citation type="journal article" date="2002" name="J. Mol. Microbiol. Biotechnol.">
        <title>The genome of Methanosarcina mazei: evidence for lateral gene transfer between Bacteria and Archaea.</title>
        <authorList>
            <person name="Deppenmeier U."/>
            <person name="Johann A."/>
            <person name="Hartsch T."/>
            <person name="Merkl R."/>
            <person name="Schmitz R.A."/>
            <person name="Martinez-Arias R."/>
            <person name="Henne A."/>
            <person name="Wiezer A."/>
            <person name="Baeumer S."/>
            <person name="Jacobi C."/>
            <person name="Brueggemann H."/>
            <person name="Lienard T."/>
            <person name="Christmann A."/>
            <person name="Boemecke M."/>
            <person name="Steckel S."/>
            <person name="Bhattacharyya A."/>
            <person name="Lykidis A."/>
            <person name="Overbeek R."/>
            <person name="Klenk H.-P."/>
            <person name="Gunsalus R.P."/>
            <person name="Fritz H.-J."/>
            <person name="Gottschalk G."/>
        </authorList>
    </citation>
    <scope>NUCLEOTIDE SEQUENCE [LARGE SCALE GENOMIC DNA]</scope>
    <source>
        <strain>ATCC BAA-159 / DSM 3647 / Goe1 / Go1 / JCM 11833 / OCM 88</strain>
    </source>
</reference>
<organism>
    <name type="scientific">Methanosarcina mazei (strain ATCC BAA-159 / DSM 3647 / Goe1 / Go1 / JCM 11833 / OCM 88)</name>
    <name type="common">Methanosarcina frisia</name>
    <dbReference type="NCBI Taxonomy" id="192952"/>
    <lineage>
        <taxon>Archaea</taxon>
        <taxon>Methanobacteriati</taxon>
        <taxon>Methanobacteriota</taxon>
        <taxon>Stenosarchaea group</taxon>
        <taxon>Methanomicrobia</taxon>
        <taxon>Methanosarcinales</taxon>
        <taxon>Methanosarcinaceae</taxon>
        <taxon>Methanosarcina</taxon>
    </lineage>
</organism>
<name>IF2B_METMA</name>
<gene>
    <name type="primary">eif2b</name>
    <name type="ordered locus">MM_1475</name>
</gene>
<feature type="chain" id="PRO_0000137423" description="Translation initiation factor 2 subunit beta">
    <location>
        <begin position="1"/>
        <end position="202"/>
    </location>
</feature>
<feature type="domain" description="TRAM">
    <location>
        <begin position="145"/>
        <end position="202"/>
    </location>
</feature>
<dbReference type="EMBL" id="AE008384">
    <property type="protein sequence ID" value="AAM31171.1"/>
    <property type="molecule type" value="Genomic_DNA"/>
</dbReference>
<dbReference type="RefSeq" id="WP_011033421.1">
    <property type="nucleotide sequence ID" value="NC_003901.1"/>
</dbReference>
<dbReference type="SMR" id="Q8PWV1"/>
<dbReference type="KEGG" id="mma:MM_1475"/>
<dbReference type="PATRIC" id="fig|192952.21.peg.1703"/>
<dbReference type="eggNOG" id="arCOG01640">
    <property type="taxonomic scope" value="Archaea"/>
</dbReference>
<dbReference type="HOGENOM" id="CLU_026663_3_0_2"/>
<dbReference type="Proteomes" id="UP000000595">
    <property type="component" value="Chromosome"/>
</dbReference>
<dbReference type="GO" id="GO:0003743">
    <property type="term" value="F:translation initiation factor activity"/>
    <property type="evidence" value="ECO:0007669"/>
    <property type="project" value="UniProtKB-UniRule"/>
</dbReference>
<dbReference type="FunFam" id="3.30.30.170:FF:000003">
    <property type="entry name" value="Translation initiation factor 2 subunit beta"/>
    <property type="match status" value="1"/>
</dbReference>
<dbReference type="Gene3D" id="3.30.30.170">
    <property type="match status" value="1"/>
</dbReference>
<dbReference type="Gene3D" id="2.40.50.140">
    <property type="entry name" value="Nucleic acid-binding proteins"/>
    <property type="match status" value="1"/>
</dbReference>
<dbReference type="HAMAP" id="MF_00232">
    <property type="entry name" value="eIF_2_beta"/>
    <property type="match status" value="1"/>
</dbReference>
<dbReference type="InterPro" id="IPR045196">
    <property type="entry name" value="IF2/IF5"/>
</dbReference>
<dbReference type="InterPro" id="IPR012340">
    <property type="entry name" value="NA-bd_OB-fold"/>
</dbReference>
<dbReference type="InterPro" id="IPR004458">
    <property type="entry name" value="TIF2_bsu_arc"/>
</dbReference>
<dbReference type="InterPro" id="IPR002792">
    <property type="entry name" value="TRAM_dom"/>
</dbReference>
<dbReference type="InterPro" id="IPR002735">
    <property type="entry name" value="Transl_init_fac_IF2/IF5_dom"/>
</dbReference>
<dbReference type="InterPro" id="IPR016189">
    <property type="entry name" value="Transl_init_fac_IF2/IF5_N"/>
</dbReference>
<dbReference type="InterPro" id="IPR016190">
    <property type="entry name" value="Transl_init_fac_IF2/IF5_Zn-bd"/>
</dbReference>
<dbReference type="NCBIfam" id="TIGR00311">
    <property type="entry name" value="aIF-2beta"/>
    <property type="match status" value="1"/>
</dbReference>
<dbReference type="NCBIfam" id="NF003067">
    <property type="entry name" value="PRK03988.1"/>
    <property type="match status" value="1"/>
</dbReference>
<dbReference type="NCBIfam" id="NF008993">
    <property type="entry name" value="PRK12336.1"/>
    <property type="match status" value="1"/>
</dbReference>
<dbReference type="PANTHER" id="PTHR23001">
    <property type="entry name" value="EUKARYOTIC TRANSLATION INITIATION FACTOR"/>
    <property type="match status" value="1"/>
</dbReference>
<dbReference type="PANTHER" id="PTHR23001:SF3">
    <property type="entry name" value="EUKARYOTIC TRANSLATION INITIATION FACTOR 2 SUBUNIT 2"/>
    <property type="match status" value="1"/>
</dbReference>
<dbReference type="Pfam" id="PF01873">
    <property type="entry name" value="eIF-5_eIF-2B"/>
    <property type="match status" value="1"/>
</dbReference>
<dbReference type="Pfam" id="PF01938">
    <property type="entry name" value="TRAM"/>
    <property type="match status" value="1"/>
</dbReference>
<dbReference type="SMART" id="SM00653">
    <property type="entry name" value="eIF2B_5"/>
    <property type="match status" value="1"/>
</dbReference>
<dbReference type="SUPFAM" id="SSF50249">
    <property type="entry name" value="Nucleic acid-binding proteins"/>
    <property type="match status" value="1"/>
</dbReference>
<dbReference type="SUPFAM" id="SSF100966">
    <property type="entry name" value="Translation initiation factor 2 beta, aIF2beta, N-terminal domain"/>
    <property type="match status" value="1"/>
</dbReference>
<dbReference type="SUPFAM" id="SSF75689">
    <property type="entry name" value="Zinc-binding domain of translation initiation factor 2 beta"/>
    <property type="match status" value="1"/>
</dbReference>
<dbReference type="PROSITE" id="PS50926">
    <property type="entry name" value="TRAM"/>
    <property type="match status" value="1"/>
</dbReference>
<evidence type="ECO:0000250" key="1"/>
<evidence type="ECO:0000305" key="2"/>
<keyword id="KW-0396">Initiation factor</keyword>
<keyword id="KW-0648">Protein biosynthesis</keyword>
<proteinExistence type="inferred from homology"/>
<sequence>MYDYEELLNRAMSKMPDTETTDARFVIPEPKLFSEGKTTILDNFGNIADTLNRDPDHLMKYLTRELGTAGKIEGTRAVFQGRFTRAQLSDNIQAYVDEYVMCSECGRPDTQLVRVDRVLVLKCSACGAHRPVKKRKVSNVVVREAIEEGGTYELRIDAVGSKGDGIAKIDKYTVFVPGATKGDVVKVKIKKISGNLAFSERA</sequence>
<accession>Q8PWV1</accession>
<comment type="function">
    <text evidence="1">eIF-2 functions in the early steps of protein synthesis by forming a ternary complex with GTP and initiator tRNA.</text>
</comment>
<comment type="subunit">
    <text evidence="1">Heterotrimer composed of an alpha, a beta and a gamma chain.</text>
</comment>
<comment type="similarity">
    <text evidence="2">Belongs to the eIF-2-beta/eIF-5 family.</text>
</comment>